<evidence type="ECO:0000255" key="1">
    <source>
        <dbReference type="HAMAP-Rule" id="MF_00104"/>
    </source>
</evidence>
<gene>
    <name evidence="1" type="primary">rnc</name>
    <name type="ordered locus">NT01EI_3032</name>
</gene>
<feature type="chain" id="PRO_1000202836" description="Ribonuclease 3">
    <location>
        <begin position="1"/>
        <end position="226"/>
    </location>
</feature>
<feature type="domain" description="RNase III" evidence="1">
    <location>
        <begin position="6"/>
        <end position="128"/>
    </location>
</feature>
<feature type="domain" description="DRBM" evidence="1">
    <location>
        <begin position="155"/>
        <end position="225"/>
    </location>
</feature>
<feature type="active site" evidence="1">
    <location>
        <position position="45"/>
    </location>
</feature>
<feature type="active site" evidence="1">
    <location>
        <position position="117"/>
    </location>
</feature>
<feature type="binding site" evidence="1">
    <location>
        <position position="41"/>
    </location>
    <ligand>
        <name>Mg(2+)</name>
        <dbReference type="ChEBI" id="CHEBI:18420"/>
    </ligand>
</feature>
<feature type="binding site" evidence="1">
    <location>
        <position position="114"/>
    </location>
    <ligand>
        <name>Mg(2+)</name>
        <dbReference type="ChEBI" id="CHEBI:18420"/>
    </ligand>
</feature>
<feature type="binding site" evidence="1">
    <location>
        <position position="117"/>
    </location>
    <ligand>
        <name>Mg(2+)</name>
        <dbReference type="ChEBI" id="CHEBI:18420"/>
    </ligand>
</feature>
<reference key="1">
    <citation type="submission" date="2009-03" db="EMBL/GenBank/DDBJ databases">
        <title>Complete genome sequence of Edwardsiella ictaluri 93-146.</title>
        <authorList>
            <person name="Williams M.L."/>
            <person name="Gillaspy A.F."/>
            <person name="Dyer D.W."/>
            <person name="Thune R.L."/>
            <person name="Waldbieser G.C."/>
            <person name="Schuster S.C."/>
            <person name="Gipson J."/>
            <person name="Zaitshik J."/>
            <person name="Landry C."/>
            <person name="Lawrence M.L."/>
        </authorList>
    </citation>
    <scope>NUCLEOTIDE SEQUENCE [LARGE SCALE GENOMIC DNA]</scope>
    <source>
        <strain>93-146</strain>
    </source>
</reference>
<protein>
    <recommendedName>
        <fullName evidence="1">Ribonuclease 3</fullName>
        <ecNumber evidence="1">3.1.26.3</ecNumber>
    </recommendedName>
    <alternativeName>
        <fullName evidence="1">Ribonuclease III</fullName>
        <shortName evidence="1">RNase III</shortName>
    </alternativeName>
</protein>
<name>RNC_EDWI9</name>
<dbReference type="EC" id="3.1.26.3" evidence="1"/>
<dbReference type="EMBL" id="CP001600">
    <property type="protein sequence ID" value="ACR70185.1"/>
    <property type="molecule type" value="Genomic_DNA"/>
</dbReference>
<dbReference type="RefSeq" id="WP_015872274.1">
    <property type="nucleotide sequence ID" value="NZ_CP169062.1"/>
</dbReference>
<dbReference type="SMR" id="C5B8Y2"/>
<dbReference type="STRING" id="67780.B6E78_07030"/>
<dbReference type="GeneID" id="69539907"/>
<dbReference type="KEGG" id="eic:NT01EI_3032"/>
<dbReference type="PATRIC" id="fig|634503.3.peg.2712"/>
<dbReference type="HOGENOM" id="CLU_000907_1_1_6"/>
<dbReference type="OrthoDB" id="9805026at2"/>
<dbReference type="Proteomes" id="UP000001485">
    <property type="component" value="Chromosome"/>
</dbReference>
<dbReference type="GO" id="GO:0005737">
    <property type="term" value="C:cytoplasm"/>
    <property type="evidence" value="ECO:0007669"/>
    <property type="project" value="UniProtKB-SubCell"/>
</dbReference>
<dbReference type="GO" id="GO:0003725">
    <property type="term" value="F:double-stranded RNA binding"/>
    <property type="evidence" value="ECO:0007669"/>
    <property type="project" value="TreeGrafter"/>
</dbReference>
<dbReference type="GO" id="GO:0046872">
    <property type="term" value="F:metal ion binding"/>
    <property type="evidence" value="ECO:0007669"/>
    <property type="project" value="UniProtKB-KW"/>
</dbReference>
<dbReference type="GO" id="GO:0004525">
    <property type="term" value="F:ribonuclease III activity"/>
    <property type="evidence" value="ECO:0007669"/>
    <property type="project" value="UniProtKB-UniRule"/>
</dbReference>
<dbReference type="GO" id="GO:0019843">
    <property type="term" value="F:rRNA binding"/>
    <property type="evidence" value="ECO:0007669"/>
    <property type="project" value="UniProtKB-KW"/>
</dbReference>
<dbReference type="GO" id="GO:0006397">
    <property type="term" value="P:mRNA processing"/>
    <property type="evidence" value="ECO:0007669"/>
    <property type="project" value="UniProtKB-UniRule"/>
</dbReference>
<dbReference type="GO" id="GO:0010468">
    <property type="term" value="P:regulation of gene expression"/>
    <property type="evidence" value="ECO:0007669"/>
    <property type="project" value="TreeGrafter"/>
</dbReference>
<dbReference type="GO" id="GO:0006364">
    <property type="term" value="P:rRNA processing"/>
    <property type="evidence" value="ECO:0007669"/>
    <property type="project" value="UniProtKB-UniRule"/>
</dbReference>
<dbReference type="GO" id="GO:0008033">
    <property type="term" value="P:tRNA processing"/>
    <property type="evidence" value="ECO:0007669"/>
    <property type="project" value="UniProtKB-KW"/>
</dbReference>
<dbReference type="CDD" id="cd10845">
    <property type="entry name" value="DSRM_RNAse_III_family"/>
    <property type="match status" value="1"/>
</dbReference>
<dbReference type="CDD" id="cd00593">
    <property type="entry name" value="RIBOc"/>
    <property type="match status" value="1"/>
</dbReference>
<dbReference type="FunFam" id="1.10.1520.10:FF:000001">
    <property type="entry name" value="Ribonuclease 3"/>
    <property type="match status" value="1"/>
</dbReference>
<dbReference type="FunFam" id="3.30.160.20:FF:000003">
    <property type="entry name" value="Ribonuclease 3"/>
    <property type="match status" value="1"/>
</dbReference>
<dbReference type="Gene3D" id="3.30.160.20">
    <property type="match status" value="1"/>
</dbReference>
<dbReference type="Gene3D" id="1.10.1520.10">
    <property type="entry name" value="Ribonuclease III domain"/>
    <property type="match status" value="1"/>
</dbReference>
<dbReference type="HAMAP" id="MF_00104">
    <property type="entry name" value="RNase_III"/>
    <property type="match status" value="1"/>
</dbReference>
<dbReference type="InterPro" id="IPR014720">
    <property type="entry name" value="dsRBD_dom"/>
</dbReference>
<dbReference type="InterPro" id="IPR011907">
    <property type="entry name" value="RNase_III"/>
</dbReference>
<dbReference type="InterPro" id="IPR000999">
    <property type="entry name" value="RNase_III_dom"/>
</dbReference>
<dbReference type="InterPro" id="IPR036389">
    <property type="entry name" value="RNase_III_sf"/>
</dbReference>
<dbReference type="NCBIfam" id="TIGR02191">
    <property type="entry name" value="RNaseIII"/>
    <property type="match status" value="1"/>
</dbReference>
<dbReference type="PANTHER" id="PTHR11207:SF0">
    <property type="entry name" value="RIBONUCLEASE 3"/>
    <property type="match status" value="1"/>
</dbReference>
<dbReference type="PANTHER" id="PTHR11207">
    <property type="entry name" value="RIBONUCLEASE III"/>
    <property type="match status" value="1"/>
</dbReference>
<dbReference type="Pfam" id="PF00035">
    <property type="entry name" value="dsrm"/>
    <property type="match status" value="1"/>
</dbReference>
<dbReference type="Pfam" id="PF14622">
    <property type="entry name" value="Ribonucleas_3_3"/>
    <property type="match status" value="1"/>
</dbReference>
<dbReference type="SMART" id="SM00358">
    <property type="entry name" value="DSRM"/>
    <property type="match status" value="1"/>
</dbReference>
<dbReference type="SMART" id="SM00535">
    <property type="entry name" value="RIBOc"/>
    <property type="match status" value="1"/>
</dbReference>
<dbReference type="SUPFAM" id="SSF54768">
    <property type="entry name" value="dsRNA-binding domain-like"/>
    <property type="match status" value="1"/>
</dbReference>
<dbReference type="SUPFAM" id="SSF69065">
    <property type="entry name" value="RNase III domain-like"/>
    <property type="match status" value="1"/>
</dbReference>
<dbReference type="PROSITE" id="PS50137">
    <property type="entry name" value="DS_RBD"/>
    <property type="match status" value="1"/>
</dbReference>
<dbReference type="PROSITE" id="PS00517">
    <property type="entry name" value="RNASE_3_1"/>
    <property type="match status" value="1"/>
</dbReference>
<dbReference type="PROSITE" id="PS50142">
    <property type="entry name" value="RNASE_3_2"/>
    <property type="match status" value="1"/>
</dbReference>
<accession>C5B8Y2</accession>
<sequence>MNPIVINRLQRKLGYTFRQHDLLMQALTHRSASSKHNERLEFLGDSILSFVIANALYHRFPRVDEGDMSRMRATLVRGNTLAEMAREFDLGECLRLGPGELKSGGFRRESILADTVEALIGGIFLDSDIQTIERLILDWYRSRLEEISPGDKQKDPKTRLQEFLQGRHLPLPSYLVVQVRGEAHDQEFTIHCQVSGLSAPVVGVGSSRRKAEQAAAEQALKQLELE</sequence>
<proteinExistence type="inferred from homology"/>
<organism>
    <name type="scientific">Edwardsiella ictaluri (strain 93-146)</name>
    <dbReference type="NCBI Taxonomy" id="634503"/>
    <lineage>
        <taxon>Bacteria</taxon>
        <taxon>Pseudomonadati</taxon>
        <taxon>Pseudomonadota</taxon>
        <taxon>Gammaproteobacteria</taxon>
        <taxon>Enterobacterales</taxon>
        <taxon>Hafniaceae</taxon>
        <taxon>Edwardsiella</taxon>
    </lineage>
</organism>
<comment type="function">
    <text evidence="1">Digests double-stranded RNA. Involved in the processing of primary rRNA transcript to yield the immediate precursors to the large and small rRNAs (23S and 16S). Processes some mRNAs, and tRNAs when they are encoded in the rRNA operon. Processes pre-crRNA and tracrRNA of type II CRISPR loci if present in the organism.</text>
</comment>
<comment type="catalytic activity">
    <reaction evidence="1">
        <text>Endonucleolytic cleavage to 5'-phosphomonoester.</text>
        <dbReference type="EC" id="3.1.26.3"/>
    </reaction>
</comment>
<comment type="cofactor">
    <cofactor evidence="1">
        <name>Mg(2+)</name>
        <dbReference type="ChEBI" id="CHEBI:18420"/>
    </cofactor>
</comment>
<comment type="subunit">
    <text evidence="1">Homodimer.</text>
</comment>
<comment type="subcellular location">
    <subcellularLocation>
        <location evidence="1">Cytoplasm</location>
    </subcellularLocation>
</comment>
<comment type="similarity">
    <text evidence="1">Belongs to the ribonuclease III family.</text>
</comment>
<keyword id="KW-0963">Cytoplasm</keyword>
<keyword id="KW-0255">Endonuclease</keyword>
<keyword id="KW-0378">Hydrolase</keyword>
<keyword id="KW-0460">Magnesium</keyword>
<keyword id="KW-0479">Metal-binding</keyword>
<keyword id="KW-0507">mRNA processing</keyword>
<keyword id="KW-0540">Nuclease</keyword>
<keyword id="KW-0694">RNA-binding</keyword>
<keyword id="KW-0698">rRNA processing</keyword>
<keyword id="KW-0699">rRNA-binding</keyword>
<keyword id="KW-0819">tRNA processing</keyword>